<organism>
    <name type="scientific">Methylorubrum extorquens (strain CM4 / NCIMB 13688)</name>
    <name type="common">Methylobacterium extorquens</name>
    <dbReference type="NCBI Taxonomy" id="440085"/>
    <lineage>
        <taxon>Bacteria</taxon>
        <taxon>Pseudomonadati</taxon>
        <taxon>Pseudomonadota</taxon>
        <taxon>Alphaproteobacteria</taxon>
        <taxon>Hyphomicrobiales</taxon>
        <taxon>Methylobacteriaceae</taxon>
        <taxon>Methylorubrum</taxon>
    </lineage>
</organism>
<accession>B7L0A5</accession>
<proteinExistence type="evidence at protein level"/>
<dbReference type="EC" id="6.3.4.3" evidence="1"/>
<dbReference type="EMBL" id="CP001298">
    <property type="protein sequence ID" value="ACK81383.1"/>
    <property type="molecule type" value="Genomic_DNA"/>
</dbReference>
<dbReference type="RefSeq" id="WP_012605559.1">
    <property type="nucleotide sequence ID" value="NC_011757.1"/>
</dbReference>
<dbReference type="PDB" id="7C11">
    <property type="method" value="X-ray"/>
    <property type="resolution" value="2.81 A"/>
    <property type="chains" value="A/B/C/D/M/N/O/P=1-557"/>
</dbReference>
<dbReference type="PDBsum" id="7C11"/>
<dbReference type="SMR" id="B7L0A5"/>
<dbReference type="KEGG" id="mch:Mchl_0447"/>
<dbReference type="HOGENOM" id="CLU_003601_3_3_5"/>
<dbReference type="UniPathway" id="UPA00193"/>
<dbReference type="Proteomes" id="UP000002385">
    <property type="component" value="Chromosome"/>
</dbReference>
<dbReference type="GO" id="GO:0005524">
    <property type="term" value="F:ATP binding"/>
    <property type="evidence" value="ECO:0007669"/>
    <property type="project" value="UniProtKB-UniRule"/>
</dbReference>
<dbReference type="GO" id="GO:0004329">
    <property type="term" value="F:formate-tetrahydrofolate ligase activity"/>
    <property type="evidence" value="ECO:0007669"/>
    <property type="project" value="UniProtKB-UniRule"/>
</dbReference>
<dbReference type="GO" id="GO:0035999">
    <property type="term" value="P:tetrahydrofolate interconversion"/>
    <property type="evidence" value="ECO:0007669"/>
    <property type="project" value="UniProtKB-UniRule"/>
</dbReference>
<dbReference type="CDD" id="cd00477">
    <property type="entry name" value="FTHFS"/>
    <property type="match status" value="1"/>
</dbReference>
<dbReference type="FunFam" id="3.30.1510.10:FF:000001">
    <property type="entry name" value="Formate--tetrahydrofolate ligase"/>
    <property type="match status" value="1"/>
</dbReference>
<dbReference type="FunFam" id="3.10.410.10:FF:000001">
    <property type="entry name" value="Putative formate--tetrahydrofolate ligase"/>
    <property type="match status" value="1"/>
</dbReference>
<dbReference type="Gene3D" id="3.30.1510.10">
    <property type="entry name" value="Domain 2, N(10)-formyltetrahydrofolate synthetase"/>
    <property type="match status" value="1"/>
</dbReference>
<dbReference type="Gene3D" id="3.10.410.10">
    <property type="entry name" value="Formyltetrahydrofolate synthetase, domain 3"/>
    <property type="match status" value="1"/>
</dbReference>
<dbReference type="Gene3D" id="3.40.50.300">
    <property type="entry name" value="P-loop containing nucleotide triphosphate hydrolases"/>
    <property type="match status" value="1"/>
</dbReference>
<dbReference type="HAMAP" id="MF_01543">
    <property type="entry name" value="FTHFS"/>
    <property type="match status" value="1"/>
</dbReference>
<dbReference type="InterPro" id="IPR000559">
    <property type="entry name" value="Formate_THF_ligase"/>
</dbReference>
<dbReference type="InterPro" id="IPR020628">
    <property type="entry name" value="Formate_THF_ligase_CS"/>
</dbReference>
<dbReference type="InterPro" id="IPR027417">
    <property type="entry name" value="P-loop_NTPase"/>
</dbReference>
<dbReference type="NCBIfam" id="NF010030">
    <property type="entry name" value="PRK13505.1"/>
    <property type="match status" value="1"/>
</dbReference>
<dbReference type="Pfam" id="PF01268">
    <property type="entry name" value="FTHFS"/>
    <property type="match status" value="1"/>
</dbReference>
<dbReference type="SUPFAM" id="SSF52540">
    <property type="entry name" value="P-loop containing nucleoside triphosphate hydrolases"/>
    <property type="match status" value="1"/>
</dbReference>
<dbReference type="PROSITE" id="PS00721">
    <property type="entry name" value="FTHFS_1"/>
    <property type="match status" value="1"/>
</dbReference>
<dbReference type="PROSITE" id="PS00722">
    <property type="entry name" value="FTHFS_2"/>
    <property type="match status" value="1"/>
</dbReference>
<feature type="chain" id="PRO_1000185257" description="Formate--tetrahydrofolate ligase">
    <location>
        <begin position="1"/>
        <end position="557"/>
    </location>
</feature>
<feature type="binding site" evidence="1">
    <location>
        <begin position="65"/>
        <end position="72"/>
    </location>
    <ligand>
        <name>ATP</name>
        <dbReference type="ChEBI" id="CHEBI:30616"/>
    </ligand>
</feature>
<feature type="helix" evidence="2">
    <location>
        <begin position="4"/>
        <end position="10"/>
    </location>
</feature>
<feature type="helix" evidence="2">
    <location>
        <begin position="16"/>
        <end position="21"/>
    </location>
</feature>
<feature type="turn" evidence="2">
    <location>
        <begin position="22"/>
        <end position="24"/>
    </location>
</feature>
<feature type="helix" evidence="2">
    <location>
        <begin position="27"/>
        <end position="29"/>
    </location>
</feature>
<feature type="strand" evidence="2">
    <location>
        <begin position="30"/>
        <end position="33"/>
    </location>
</feature>
<feature type="turn" evidence="2">
    <location>
        <begin position="34"/>
        <end position="36"/>
    </location>
</feature>
<feature type="strand" evidence="2">
    <location>
        <begin position="37"/>
        <end position="40"/>
    </location>
</feature>
<feature type="helix" evidence="2">
    <location>
        <begin position="42"/>
        <end position="46"/>
    </location>
</feature>
<feature type="turn" evidence="2">
    <location>
        <begin position="47"/>
        <end position="50"/>
    </location>
</feature>
<feature type="strand" evidence="2">
    <location>
        <begin position="55"/>
        <end position="63"/>
    </location>
</feature>
<feature type="helix" evidence="2">
    <location>
        <begin position="71"/>
        <end position="84"/>
    </location>
</feature>
<feature type="strand" evidence="2">
    <location>
        <begin position="89"/>
        <end position="93"/>
    </location>
</feature>
<feature type="helix" evidence="2">
    <location>
        <begin position="98"/>
        <end position="102"/>
    </location>
</feature>
<feature type="strand" evidence="2">
    <location>
        <begin position="109"/>
        <end position="111"/>
    </location>
</feature>
<feature type="strand" evidence="2">
    <location>
        <begin position="114"/>
        <end position="117"/>
    </location>
</feature>
<feature type="helix" evidence="2">
    <location>
        <begin position="119"/>
        <end position="123"/>
    </location>
</feature>
<feature type="turn" evidence="2">
    <location>
        <begin position="124"/>
        <end position="127"/>
    </location>
</feature>
<feature type="helix" evidence="2">
    <location>
        <begin position="129"/>
        <end position="150"/>
    </location>
</feature>
<feature type="strand" evidence="2">
    <location>
        <begin position="156"/>
        <end position="161"/>
    </location>
</feature>
<feature type="strand" evidence="2">
    <location>
        <begin position="165"/>
        <end position="169"/>
    </location>
</feature>
<feature type="helix" evidence="2">
    <location>
        <begin position="172"/>
        <end position="174"/>
    </location>
</feature>
<feature type="strand" evidence="2">
    <location>
        <begin position="175"/>
        <end position="180"/>
    </location>
</feature>
<feature type="helix" evidence="2">
    <location>
        <begin position="184"/>
        <end position="186"/>
    </location>
</feature>
<feature type="strand" evidence="2">
    <location>
        <begin position="190"/>
        <end position="192"/>
    </location>
</feature>
<feature type="strand" evidence="2">
    <location>
        <begin position="194"/>
        <end position="196"/>
    </location>
</feature>
<feature type="helix" evidence="2">
    <location>
        <begin position="197"/>
        <end position="199"/>
    </location>
</feature>
<feature type="helix" evidence="2">
    <location>
        <begin position="201"/>
        <end position="206"/>
    </location>
</feature>
<feature type="helix" evidence="2">
    <location>
        <begin position="212"/>
        <end position="220"/>
    </location>
</feature>
<feature type="strand" evidence="2">
    <location>
        <begin position="223"/>
        <end position="227"/>
    </location>
</feature>
<feature type="strand" evidence="2">
    <location>
        <begin position="232"/>
        <end position="234"/>
    </location>
</feature>
<feature type="turn" evidence="2">
    <location>
        <begin position="235"/>
        <end position="239"/>
    </location>
</feature>
<feature type="helix" evidence="2">
    <location>
        <begin position="241"/>
        <end position="248"/>
    </location>
</feature>
<feature type="turn" evidence="2">
    <location>
        <begin position="249"/>
        <end position="252"/>
    </location>
</feature>
<feature type="strand" evidence="2">
    <location>
        <begin position="255"/>
        <end position="259"/>
    </location>
</feature>
<feature type="strand" evidence="2">
    <location>
        <begin position="264"/>
        <end position="267"/>
    </location>
</feature>
<feature type="strand" evidence="2">
    <location>
        <begin position="273"/>
        <end position="276"/>
    </location>
</feature>
<feature type="helix" evidence="2">
    <location>
        <begin position="282"/>
        <end position="291"/>
    </location>
</feature>
<feature type="strand" evidence="2">
    <location>
        <begin position="293"/>
        <end position="298"/>
    </location>
</feature>
<feature type="turn" evidence="2">
    <location>
        <begin position="303"/>
        <end position="305"/>
    </location>
</feature>
<feature type="helix" evidence="2">
    <location>
        <begin position="306"/>
        <end position="312"/>
    </location>
</feature>
<feature type="helix" evidence="2">
    <location>
        <begin position="314"/>
        <end position="318"/>
    </location>
</feature>
<feature type="strand" evidence="2">
    <location>
        <begin position="323"/>
        <end position="329"/>
    </location>
</feature>
<feature type="helix" evidence="2">
    <location>
        <begin position="331"/>
        <end position="337"/>
    </location>
</feature>
<feature type="helix" evidence="2">
    <location>
        <begin position="350"/>
        <end position="369"/>
    </location>
</feature>
<feature type="strand" evidence="2">
    <location>
        <begin position="374"/>
        <end position="379"/>
    </location>
</feature>
<feature type="helix" evidence="2">
    <location>
        <begin position="386"/>
        <end position="400"/>
    </location>
</feature>
<feature type="strand" evidence="2">
    <location>
        <begin position="404"/>
        <end position="407"/>
    </location>
</feature>
<feature type="helix" evidence="2">
    <location>
        <begin position="409"/>
        <end position="412"/>
    </location>
</feature>
<feature type="helix" evidence="2">
    <location>
        <begin position="413"/>
        <end position="417"/>
    </location>
</feature>
<feature type="helix" evidence="2">
    <location>
        <begin position="418"/>
        <end position="429"/>
    </location>
</feature>
<feature type="strand" evidence="2">
    <location>
        <begin position="441"/>
        <end position="443"/>
    </location>
</feature>
<feature type="helix" evidence="2">
    <location>
        <begin position="445"/>
        <end position="456"/>
    </location>
</feature>
<feature type="strand" evidence="2">
    <location>
        <begin position="459"/>
        <end position="464"/>
    </location>
</feature>
<feature type="helix" evidence="2">
    <location>
        <begin position="466"/>
        <end position="477"/>
    </location>
</feature>
<feature type="turn" evidence="2">
    <location>
        <begin position="478"/>
        <end position="480"/>
    </location>
</feature>
<feature type="strand" evidence="2">
    <location>
        <begin position="481"/>
        <end position="483"/>
    </location>
</feature>
<feature type="strand" evidence="2">
    <location>
        <begin position="485"/>
        <end position="488"/>
    </location>
</feature>
<feature type="strand" evidence="2">
    <location>
        <begin position="491"/>
        <end position="497"/>
    </location>
</feature>
<feature type="strand" evidence="2">
    <location>
        <begin position="506"/>
        <end position="511"/>
    </location>
</feature>
<feature type="strand" evidence="2">
    <location>
        <begin position="513"/>
        <end position="517"/>
    </location>
</feature>
<feature type="turn" evidence="2">
    <location>
        <begin position="518"/>
        <end position="521"/>
    </location>
</feature>
<feature type="strand" evidence="2">
    <location>
        <begin position="522"/>
        <end position="526"/>
    </location>
</feature>
<feature type="helix" evidence="2">
    <location>
        <begin position="541"/>
        <end position="544"/>
    </location>
</feature>
<feature type="strand" evidence="2">
    <location>
        <begin position="549"/>
        <end position="551"/>
    </location>
</feature>
<feature type="strand" evidence="2">
    <location>
        <begin position="553"/>
        <end position="555"/>
    </location>
</feature>
<protein>
    <recommendedName>
        <fullName evidence="1">Formate--tetrahydrofolate ligase</fullName>
        <ecNumber evidence="1">6.3.4.3</ecNumber>
    </recommendedName>
    <alternativeName>
        <fullName evidence="1">Formyltetrahydrofolate synthetase</fullName>
        <shortName evidence="1">FHS</shortName>
        <shortName evidence="1">FTHFS</shortName>
    </alternativeName>
</protein>
<gene>
    <name evidence="1" type="primary">fhs</name>
    <name type="ordered locus">Mchl_0447</name>
</gene>
<sequence>MPSDIEIARAATLKPIAQVAEKLGIPDEALHNYGKHIAKIDHDFIASLEGKPEGKLVLVTAISPTPAGEGKTTTTVGLGDALNRIGKRAVMCLREPSLGPCFGMKGGAAGGGKAQVVPMEQINLHFTGDFHAITSAHSLAAALIDNHIYWANELNIDVRRIHWRRVVDMNDRALRAINQSLGGVANGFPREDGFDITVASEVMAVFCLAKNLADLEERLGRIVIAETRDRKPVTLADVKATGAMTVLLKDALQPNLVQTLEGNPALIHGGPFANIAHGCNSVIATRTGLRLADYTVTEAGFGADLGAEKFIDIKCRQTGLKPSSVVIVATIRALKMHGGVNKKDLQAENLDALEKGFANLERHVNNVRSFGLPVVVGVNHFFQDTDAEHARLKELCRDRLQVEAITCKHWAEGGAGAEALAQAVVKLAEGEQKPLTFAYETETKITDKIKAIATKLYGAADIQIESKAATKLAGFEKDGYGKLPVCMAKTQYSFSTDPTLMGAPSGHLVSVRDVRLSAGAGFVVVICGEIMTMPGLPKVPAADTIRLDANGQIDGLF</sequence>
<evidence type="ECO:0000255" key="1">
    <source>
        <dbReference type="HAMAP-Rule" id="MF_01543"/>
    </source>
</evidence>
<evidence type="ECO:0007829" key="2">
    <source>
        <dbReference type="PDB" id="7C11"/>
    </source>
</evidence>
<reference key="1">
    <citation type="submission" date="2008-12" db="EMBL/GenBank/DDBJ databases">
        <title>Complete sequence of chromosome of Methylobacterium chloromethanicum CM4.</title>
        <authorList>
            <consortium name="US DOE Joint Genome Institute"/>
            <person name="Lucas S."/>
            <person name="Copeland A."/>
            <person name="Lapidus A."/>
            <person name="Glavina del Rio T."/>
            <person name="Dalin E."/>
            <person name="Tice H."/>
            <person name="Bruce D."/>
            <person name="Goodwin L."/>
            <person name="Pitluck S."/>
            <person name="Chertkov O."/>
            <person name="Brettin T."/>
            <person name="Detter J.C."/>
            <person name="Han C."/>
            <person name="Larimer F."/>
            <person name="Land M."/>
            <person name="Hauser L."/>
            <person name="Kyrpides N."/>
            <person name="Mikhailova N."/>
            <person name="Marx C."/>
            <person name="Richardson P."/>
        </authorList>
    </citation>
    <scope>NUCLEOTIDE SEQUENCE [LARGE SCALE GENOMIC DNA]</scope>
    <source>
        <strain>CM4 / NCIMB 13688</strain>
    </source>
</reference>
<keyword id="KW-0002">3D-structure</keyword>
<keyword id="KW-0067">ATP-binding</keyword>
<keyword id="KW-0436">Ligase</keyword>
<keyword id="KW-0547">Nucleotide-binding</keyword>
<keyword id="KW-0554">One-carbon metabolism</keyword>
<comment type="catalytic activity">
    <reaction evidence="1">
        <text>(6S)-5,6,7,8-tetrahydrofolate + formate + ATP = (6R)-10-formyltetrahydrofolate + ADP + phosphate</text>
        <dbReference type="Rhea" id="RHEA:20221"/>
        <dbReference type="ChEBI" id="CHEBI:15740"/>
        <dbReference type="ChEBI" id="CHEBI:30616"/>
        <dbReference type="ChEBI" id="CHEBI:43474"/>
        <dbReference type="ChEBI" id="CHEBI:57453"/>
        <dbReference type="ChEBI" id="CHEBI:195366"/>
        <dbReference type="ChEBI" id="CHEBI:456216"/>
        <dbReference type="EC" id="6.3.4.3"/>
    </reaction>
</comment>
<comment type="pathway">
    <text evidence="1">One-carbon metabolism; tetrahydrofolate interconversion.</text>
</comment>
<comment type="similarity">
    <text evidence="1">Belongs to the formate--tetrahydrofolate ligase family.</text>
</comment>
<name>FTHS_METC4</name>